<reference key="1">
    <citation type="journal article" date="2002" name="Plant Cell">
        <title>Molecular cloning and characterization of glucanase inhibitor proteins: coevolution of a counterdefense mechanism by plant pathogens.</title>
        <authorList>
            <person name="Rose J.K."/>
            <person name="Ham K.S."/>
            <person name="Darvill A.G."/>
            <person name="Albersheim P."/>
        </authorList>
    </citation>
    <scope>NUCLEOTIDE SEQUENCE [MRNA]</scope>
    <scope>PROTEIN SEQUENCE OF 29-55; 96-101; 131-135; 136-151; 152-157; 213-221 AND 236-242</scope>
    <scope>SUBCELLULAR LOCATION</scope>
    <scope>INDUCTION</scope>
    <scope>INTERACTION WITH HOST EGASEA</scope>
    <scope>FUNCTION</scope>
</reference>
<reference key="2">
    <citation type="journal article" date="2005" name="Genetics">
        <title>Selection on Glycine beta-1,3-endoglucanase genes differentially inhibited by a Phytophthora glucanase inhibitor protein.</title>
        <authorList>
            <person name="Bishop J.G."/>
            <person name="Ripoll D.R."/>
            <person name="Bashir S."/>
            <person name="Damasceno C.M."/>
            <person name="Seeds J.D."/>
            <person name="Rose J.K."/>
        </authorList>
    </citation>
    <scope>INTERACTION WITH HOST EGASEA</scope>
    <scope>FUNCTION</scope>
</reference>
<name>GIP1_PHYSO</name>
<protein>
    <recommendedName>
        <fullName evidence="5">Glucanase inhibitor protein 1</fullName>
    </recommendedName>
</protein>
<keyword id="KW-0903">Direct protein sequencing</keyword>
<keyword id="KW-1015">Disulfide bond</keyword>
<keyword id="KW-0325">Glycoprotein</keyword>
<keyword id="KW-0964">Secreted</keyword>
<keyword id="KW-0732">Signal</keyword>
<keyword id="KW-0843">Virulence</keyword>
<accession>Q945U0</accession>
<sequence>MKVFPALTSALVALGTAGVEAEHVQRSLVMGGGTVPVGAKTYTVGLRTTAEGDTFCGGALISPTHVLTTATCTASLGSGPAEWAAVGTHYLNGAKDGERLKVVSAQNHTLYNPNNFAYNFAVLTLEKPSKFSPVKLPAADGSDIAPSMSSKLMGWGDTSYPNGARANELQSVELRVVTSNCTYTVGPSEVCAGGEEGKDKCAGDTGGPLIKENGSGDADDILIGLASWGMPCGHKDVASVYARVSAGLEWINSVIKK</sequence>
<evidence type="ECO:0000255" key="1">
    <source>
        <dbReference type="PROSITE-ProRule" id="PRU00274"/>
    </source>
</evidence>
<evidence type="ECO:0000255" key="2">
    <source>
        <dbReference type="PROSITE-ProRule" id="PRU00498"/>
    </source>
</evidence>
<evidence type="ECO:0000269" key="3">
    <source>
    </source>
</evidence>
<evidence type="ECO:0000269" key="4">
    <source>
    </source>
</evidence>
<evidence type="ECO:0000303" key="5">
    <source>
    </source>
</evidence>
<evidence type="ECO:0000305" key="6"/>
<evidence type="ECO:0000305" key="7">
    <source>
    </source>
</evidence>
<dbReference type="EMBL" id="AF406607">
    <property type="protein sequence ID" value="AAL11720.1"/>
    <property type="molecule type" value="mRNA"/>
</dbReference>
<dbReference type="RefSeq" id="XP_009538431.1">
    <property type="nucleotide sequence ID" value="XM_009540136.1"/>
</dbReference>
<dbReference type="RefSeq" id="XP_009538433.1">
    <property type="nucleotide sequence ID" value="XM_009540138.1"/>
</dbReference>
<dbReference type="RefSeq" id="XP_009538436.1">
    <property type="nucleotide sequence ID" value="XM_009540141.1"/>
</dbReference>
<dbReference type="SMR" id="Q945U0"/>
<dbReference type="GlyCosmos" id="Q945U0">
    <property type="glycosylation" value="3 sites, No reported glycans"/>
</dbReference>
<dbReference type="KEGG" id="psoj:PHYSODRAFT_341789"/>
<dbReference type="KEGG" id="psoj:PHYSODRAFT_341794"/>
<dbReference type="KEGG" id="psoj:PHYSODRAFT_531224"/>
<dbReference type="VEuPathDB" id="FungiDB:PHYSODRAFT_341789"/>
<dbReference type="VEuPathDB" id="FungiDB:PHYSODRAFT_341794"/>
<dbReference type="VEuPathDB" id="FungiDB:PHYSODRAFT_531224"/>
<dbReference type="HOGENOM" id="CLU_006842_7_3_1"/>
<dbReference type="OrthoDB" id="10066789at2759"/>
<dbReference type="PHI-base" id="PHI:652"/>
<dbReference type="GO" id="GO:0005576">
    <property type="term" value="C:extracellular region"/>
    <property type="evidence" value="ECO:0007669"/>
    <property type="project" value="UniProtKB-SubCell"/>
</dbReference>
<dbReference type="GO" id="GO:0004252">
    <property type="term" value="F:serine-type endopeptidase activity"/>
    <property type="evidence" value="ECO:0007669"/>
    <property type="project" value="InterPro"/>
</dbReference>
<dbReference type="GO" id="GO:0006508">
    <property type="term" value="P:proteolysis"/>
    <property type="evidence" value="ECO:0007669"/>
    <property type="project" value="InterPro"/>
</dbReference>
<dbReference type="CDD" id="cd00190">
    <property type="entry name" value="Tryp_SPc"/>
    <property type="match status" value="1"/>
</dbReference>
<dbReference type="Gene3D" id="2.40.10.10">
    <property type="entry name" value="Trypsin-like serine proteases"/>
    <property type="match status" value="1"/>
</dbReference>
<dbReference type="InterPro" id="IPR050430">
    <property type="entry name" value="Peptidase_S1"/>
</dbReference>
<dbReference type="InterPro" id="IPR009003">
    <property type="entry name" value="Peptidase_S1_PA"/>
</dbReference>
<dbReference type="InterPro" id="IPR043504">
    <property type="entry name" value="Peptidase_S1_PA_chymotrypsin"/>
</dbReference>
<dbReference type="InterPro" id="IPR001314">
    <property type="entry name" value="Peptidase_S1A"/>
</dbReference>
<dbReference type="InterPro" id="IPR001254">
    <property type="entry name" value="Trypsin_dom"/>
</dbReference>
<dbReference type="PANTHER" id="PTHR24276:SF98">
    <property type="entry name" value="FI18310P1-RELATED"/>
    <property type="match status" value="1"/>
</dbReference>
<dbReference type="PANTHER" id="PTHR24276">
    <property type="entry name" value="POLYSERASE-RELATED"/>
    <property type="match status" value="1"/>
</dbReference>
<dbReference type="Pfam" id="PF00089">
    <property type="entry name" value="Trypsin"/>
    <property type="match status" value="1"/>
</dbReference>
<dbReference type="PRINTS" id="PR00722">
    <property type="entry name" value="CHYMOTRYPSIN"/>
</dbReference>
<dbReference type="SMART" id="SM00020">
    <property type="entry name" value="Tryp_SPc"/>
    <property type="match status" value="1"/>
</dbReference>
<dbReference type="SUPFAM" id="SSF50494">
    <property type="entry name" value="Trypsin-like serine proteases"/>
    <property type="match status" value="1"/>
</dbReference>
<dbReference type="PROSITE" id="PS50240">
    <property type="entry name" value="TRYPSIN_DOM"/>
    <property type="match status" value="1"/>
</dbReference>
<comment type="function">
    <text evidence="3 4">Secreted effector that suppresses host plant glucan elicitor-mediated defense responses (PubMed:12084830, PubMed:15545660). Targets host endoglucanase EGaseA and inhibits the EGaseA-mediated release of elicitor-active glucan oligosaccharides from P.sojae cell walls (PubMed:12084830, PubMed:15545660).</text>
</comment>
<comment type="subunit">
    <text evidence="3 4">Interacts with host endoglucanases EGaseA.</text>
</comment>
<comment type="subcellular location">
    <subcellularLocation>
        <location evidence="3">Secreted</location>
    </subcellularLocation>
</comment>
<comment type="induction">
    <text evidence="3">Expressed during pathogen infection.</text>
</comment>
<comment type="similarity">
    <text evidence="6">Belongs to the peptidase S1 family.</text>
</comment>
<comment type="caution">
    <text evidence="7">None of the predicted glucanase inhibitor proteins (GIPS) has an intact catalytic triad, therefore, GIPs are proteolytically inactive.</text>
</comment>
<proteinExistence type="evidence at protein level"/>
<gene>
    <name evidence="5" type="primary">GIP1</name>
</gene>
<organism>
    <name type="scientific">Phytophthora sojae</name>
    <name type="common">Soybean stem and root rot agent</name>
    <name type="synonym">Phytophthora megasperma f. sp. glycines</name>
    <dbReference type="NCBI Taxonomy" id="67593"/>
    <lineage>
        <taxon>Eukaryota</taxon>
        <taxon>Sar</taxon>
        <taxon>Stramenopiles</taxon>
        <taxon>Oomycota</taxon>
        <taxon>Peronosporales</taxon>
        <taxon>Peronosporaceae</taxon>
        <taxon>Phytophthora</taxon>
    </lineage>
</organism>
<feature type="signal peptide" evidence="3">
    <location>
        <begin position="1"/>
        <end position="28"/>
    </location>
</feature>
<feature type="chain" id="PRO_5004320279" description="Glucanase inhibitor protein 1">
    <location>
        <begin position="29"/>
        <end position="257"/>
    </location>
</feature>
<feature type="domain" description="Peptidase S1" evidence="1">
    <location>
        <begin position="29"/>
        <end position="256"/>
    </location>
</feature>
<feature type="glycosylation site" description="N-linked (GlcNAc...) asparagine" evidence="2">
    <location>
        <position position="107"/>
    </location>
</feature>
<feature type="glycosylation site" description="N-linked (GlcNAc...) asparagine" evidence="2">
    <location>
        <position position="180"/>
    </location>
</feature>
<feature type="glycosylation site" description="N-linked (GlcNAc...) asparagine" evidence="2">
    <location>
        <position position="213"/>
    </location>
</feature>
<feature type="disulfide bond" evidence="1">
    <location>
        <begin position="56"/>
        <end position="72"/>
    </location>
</feature>
<feature type="disulfide bond" evidence="1">
    <location>
        <begin position="181"/>
        <end position="191"/>
    </location>
</feature>
<feature type="disulfide bond" evidence="1">
    <location>
        <begin position="201"/>
        <end position="232"/>
    </location>
</feature>